<dbReference type="EC" id="2.7.1.170" evidence="1"/>
<dbReference type="EMBL" id="CP001252">
    <property type="protein sequence ID" value="ACK47630.1"/>
    <property type="molecule type" value="Genomic_DNA"/>
</dbReference>
<dbReference type="RefSeq" id="WP_012588269.1">
    <property type="nucleotide sequence ID" value="NC_011663.1"/>
</dbReference>
<dbReference type="SMR" id="B8EBT5"/>
<dbReference type="KEGG" id="sbp:Sbal223_3145"/>
<dbReference type="HOGENOM" id="CLU_038782_0_0_6"/>
<dbReference type="UniPathway" id="UPA00343"/>
<dbReference type="UniPathway" id="UPA00544"/>
<dbReference type="Proteomes" id="UP000002507">
    <property type="component" value="Chromosome"/>
</dbReference>
<dbReference type="GO" id="GO:0005524">
    <property type="term" value="F:ATP binding"/>
    <property type="evidence" value="ECO:0007669"/>
    <property type="project" value="UniProtKB-UniRule"/>
</dbReference>
<dbReference type="GO" id="GO:0016301">
    <property type="term" value="F:kinase activity"/>
    <property type="evidence" value="ECO:0007669"/>
    <property type="project" value="UniProtKB-KW"/>
</dbReference>
<dbReference type="GO" id="GO:0016773">
    <property type="term" value="F:phosphotransferase activity, alcohol group as acceptor"/>
    <property type="evidence" value="ECO:0007669"/>
    <property type="project" value="UniProtKB-UniRule"/>
</dbReference>
<dbReference type="GO" id="GO:0097175">
    <property type="term" value="P:1,6-anhydro-N-acetyl-beta-muramic acid catabolic process"/>
    <property type="evidence" value="ECO:0007669"/>
    <property type="project" value="UniProtKB-UniRule"/>
</dbReference>
<dbReference type="GO" id="GO:0006040">
    <property type="term" value="P:amino sugar metabolic process"/>
    <property type="evidence" value="ECO:0007669"/>
    <property type="project" value="InterPro"/>
</dbReference>
<dbReference type="GO" id="GO:0009254">
    <property type="term" value="P:peptidoglycan turnover"/>
    <property type="evidence" value="ECO:0007669"/>
    <property type="project" value="UniProtKB-UniRule"/>
</dbReference>
<dbReference type="CDD" id="cd24050">
    <property type="entry name" value="ASKHA_NBD_ANMK"/>
    <property type="match status" value="1"/>
</dbReference>
<dbReference type="Gene3D" id="3.30.420.40">
    <property type="match status" value="2"/>
</dbReference>
<dbReference type="HAMAP" id="MF_01270">
    <property type="entry name" value="AnhMurNAc_kinase"/>
    <property type="match status" value="1"/>
</dbReference>
<dbReference type="InterPro" id="IPR005338">
    <property type="entry name" value="Anhydro_N_Ac-Mur_kinase"/>
</dbReference>
<dbReference type="InterPro" id="IPR043129">
    <property type="entry name" value="ATPase_NBD"/>
</dbReference>
<dbReference type="NCBIfam" id="NF007139">
    <property type="entry name" value="PRK09585.1-3"/>
    <property type="match status" value="1"/>
</dbReference>
<dbReference type="NCBIfam" id="NF007148">
    <property type="entry name" value="PRK09585.3-2"/>
    <property type="match status" value="1"/>
</dbReference>
<dbReference type="PANTHER" id="PTHR30605">
    <property type="entry name" value="ANHYDRO-N-ACETYLMURAMIC ACID KINASE"/>
    <property type="match status" value="1"/>
</dbReference>
<dbReference type="PANTHER" id="PTHR30605:SF0">
    <property type="entry name" value="ANHYDRO-N-ACETYLMURAMIC ACID KINASE"/>
    <property type="match status" value="1"/>
</dbReference>
<dbReference type="Pfam" id="PF03702">
    <property type="entry name" value="AnmK"/>
    <property type="match status" value="1"/>
</dbReference>
<dbReference type="SUPFAM" id="SSF53067">
    <property type="entry name" value="Actin-like ATPase domain"/>
    <property type="match status" value="1"/>
</dbReference>
<reference key="1">
    <citation type="submission" date="2008-12" db="EMBL/GenBank/DDBJ databases">
        <title>Complete sequence of chromosome of Shewanella baltica OS223.</title>
        <authorList>
            <consortium name="US DOE Joint Genome Institute"/>
            <person name="Lucas S."/>
            <person name="Copeland A."/>
            <person name="Lapidus A."/>
            <person name="Glavina del Rio T."/>
            <person name="Dalin E."/>
            <person name="Tice H."/>
            <person name="Bruce D."/>
            <person name="Goodwin L."/>
            <person name="Pitluck S."/>
            <person name="Chertkov O."/>
            <person name="Meincke L."/>
            <person name="Brettin T."/>
            <person name="Detter J.C."/>
            <person name="Han C."/>
            <person name="Kuske C.R."/>
            <person name="Larimer F."/>
            <person name="Land M."/>
            <person name="Hauser L."/>
            <person name="Kyrpides N."/>
            <person name="Ovchinnikova G."/>
            <person name="Brettar I."/>
            <person name="Rodrigues J."/>
            <person name="Konstantinidis K."/>
            <person name="Tiedje J."/>
        </authorList>
    </citation>
    <scope>NUCLEOTIDE SEQUENCE [LARGE SCALE GENOMIC DNA]</scope>
    <source>
        <strain>OS223</strain>
    </source>
</reference>
<gene>
    <name evidence="1" type="primary">anmK</name>
    <name type="ordered locus">Sbal223_3145</name>
</gene>
<comment type="function">
    <text evidence="1">Catalyzes the specific phosphorylation of 1,6-anhydro-N-acetylmuramic acid (anhMurNAc) with the simultaneous cleavage of the 1,6-anhydro ring, generating MurNAc-6-P. Is required for the utilization of anhMurNAc either imported from the medium or derived from its own cell wall murein, and thus plays a role in cell wall recycling.</text>
</comment>
<comment type="catalytic activity">
    <reaction evidence="1">
        <text>1,6-anhydro-N-acetyl-beta-muramate + ATP + H2O = N-acetyl-D-muramate 6-phosphate + ADP + H(+)</text>
        <dbReference type="Rhea" id="RHEA:24952"/>
        <dbReference type="ChEBI" id="CHEBI:15377"/>
        <dbReference type="ChEBI" id="CHEBI:15378"/>
        <dbReference type="ChEBI" id="CHEBI:30616"/>
        <dbReference type="ChEBI" id="CHEBI:58690"/>
        <dbReference type="ChEBI" id="CHEBI:58722"/>
        <dbReference type="ChEBI" id="CHEBI:456216"/>
        <dbReference type="EC" id="2.7.1.170"/>
    </reaction>
</comment>
<comment type="pathway">
    <text evidence="1">Amino-sugar metabolism; 1,6-anhydro-N-acetylmuramate degradation.</text>
</comment>
<comment type="pathway">
    <text evidence="1">Cell wall biogenesis; peptidoglycan recycling.</text>
</comment>
<comment type="similarity">
    <text evidence="1">Belongs to the anhydro-N-acetylmuramic acid kinase family.</text>
</comment>
<organism>
    <name type="scientific">Shewanella baltica (strain OS223)</name>
    <dbReference type="NCBI Taxonomy" id="407976"/>
    <lineage>
        <taxon>Bacteria</taxon>
        <taxon>Pseudomonadati</taxon>
        <taxon>Pseudomonadota</taxon>
        <taxon>Gammaproteobacteria</taxon>
        <taxon>Alteromonadales</taxon>
        <taxon>Shewanellaceae</taxon>
        <taxon>Shewanella</taxon>
    </lineage>
</organism>
<feature type="chain" id="PRO_1000165170" description="Anhydro-N-acetylmuramic acid kinase">
    <location>
        <begin position="1"/>
        <end position="369"/>
    </location>
</feature>
<feature type="binding site" evidence="1">
    <location>
        <begin position="12"/>
        <end position="19"/>
    </location>
    <ligand>
        <name>ATP</name>
        <dbReference type="ChEBI" id="CHEBI:30616"/>
    </ligand>
</feature>
<keyword id="KW-0067">ATP-binding</keyword>
<keyword id="KW-0119">Carbohydrate metabolism</keyword>
<keyword id="KW-0418">Kinase</keyword>
<keyword id="KW-0547">Nucleotide-binding</keyword>
<keyword id="KW-0808">Transferase</keyword>
<protein>
    <recommendedName>
        <fullName evidence="1">Anhydro-N-acetylmuramic acid kinase</fullName>
        <ecNumber evidence="1">2.7.1.170</ecNumber>
    </recommendedName>
    <alternativeName>
        <fullName evidence="1">AnhMurNAc kinase</fullName>
    </alternativeName>
</protein>
<sequence>MKNAYYIGLMSGTSMDGVDAVLVDFSGAQPQLIASHTEAIPSHLLKGLQRLCSPSTDEINRLGRLDRNVGELFALAVNNLLTKCAIAKEEVIAIGSHGQTVRHMPNLEVGFTLQIGDPNTIATETGIDVIADFRRKDIALGGQGAPLVPAFHQQTFAEVGKKRIILNIGGIANITYLPGNSDQVLGFDTGPGNTLVDAWIQQVKSEPFDRDGAWAASGKTDQDLLTQLLSHPYFSLAYPKSTGRELFNQAWLEQQLSPFNHLDEEDIQSTLLDLTCHSIARDMIKLSNEGELYVCGGGAFNGQLMQRLAALLPGYTLNTTSALGVDPKWAEGIAFAWLAMRNHLGLPANLPAVTGASREAVLGGRFSAK</sequence>
<proteinExistence type="inferred from homology"/>
<evidence type="ECO:0000255" key="1">
    <source>
        <dbReference type="HAMAP-Rule" id="MF_01270"/>
    </source>
</evidence>
<accession>B8EBT5</accession>
<name>ANMK_SHEB2</name>